<reference key="1">
    <citation type="submission" date="1998-09" db="EMBL/GenBank/DDBJ databases">
        <title>Molecular cloning and characterization of inorganic pyrophosphatase in rice.</title>
        <authorList>
            <person name="Lee J.-S."/>
        </authorList>
    </citation>
    <scope>NUCLEOTIDE SEQUENCE [MRNA]</scope>
    <source>
        <strain>cv. Ilpoom</strain>
        <tissue>Leaf</tissue>
    </source>
</reference>
<reference key="2">
    <citation type="journal article" date="2005" name="Nature">
        <title>The map-based sequence of the rice genome.</title>
        <authorList>
            <consortium name="International rice genome sequencing project (IRGSP)"/>
        </authorList>
    </citation>
    <scope>NUCLEOTIDE SEQUENCE [LARGE SCALE GENOMIC DNA]</scope>
    <source>
        <strain>cv. Nipponbare</strain>
    </source>
</reference>
<reference key="3">
    <citation type="journal article" date="2008" name="Nucleic Acids Res.">
        <title>The rice annotation project database (RAP-DB): 2008 update.</title>
        <authorList>
            <consortium name="The rice annotation project (RAP)"/>
        </authorList>
    </citation>
    <scope>GENOME REANNOTATION</scope>
    <source>
        <strain>cv. Nipponbare</strain>
    </source>
</reference>
<reference key="4">
    <citation type="journal article" date="2013" name="Rice">
        <title>Improvement of the Oryza sativa Nipponbare reference genome using next generation sequence and optical map data.</title>
        <authorList>
            <person name="Kawahara Y."/>
            <person name="de la Bastide M."/>
            <person name="Hamilton J.P."/>
            <person name="Kanamori H."/>
            <person name="McCombie W.R."/>
            <person name="Ouyang S."/>
            <person name="Schwartz D.C."/>
            <person name="Tanaka T."/>
            <person name="Wu J."/>
            <person name="Zhou S."/>
            <person name="Childs K.L."/>
            <person name="Davidson R.M."/>
            <person name="Lin H."/>
            <person name="Quesada-Ocampo L."/>
            <person name="Vaillancourt B."/>
            <person name="Sakai H."/>
            <person name="Lee S.S."/>
            <person name="Kim J."/>
            <person name="Numa H."/>
            <person name="Itoh T."/>
            <person name="Buell C.R."/>
            <person name="Matsumoto T."/>
        </authorList>
    </citation>
    <scope>GENOME REANNOTATION</scope>
    <source>
        <strain>cv. Nipponbare</strain>
    </source>
</reference>
<reference key="5">
    <citation type="journal article" date="2005" name="PLoS Biol.">
        <title>The genomes of Oryza sativa: a history of duplications.</title>
        <authorList>
            <person name="Yu J."/>
            <person name="Wang J."/>
            <person name="Lin W."/>
            <person name="Li S."/>
            <person name="Li H."/>
            <person name="Zhou J."/>
            <person name="Ni P."/>
            <person name="Dong W."/>
            <person name="Hu S."/>
            <person name="Zeng C."/>
            <person name="Zhang J."/>
            <person name="Zhang Y."/>
            <person name="Li R."/>
            <person name="Xu Z."/>
            <person name="Li S."/>
            <person name="Li X."/>
            <person name="Zheng H."/>
            <person name="Cong L."/>
            <person name="Lin L."/>
            <person name="Yin J."/>
            <person name="Geng J."/>
            <person name="Li G."/>
            <person name="Shi J."/>
            <person name="Liu J."/>
            <person name="Lv H."/>
            <person name="Li J."/>
            <person name="Wang J."/>
            <person name="Deng Y."/>
            <person name="Ran L."/>
            <person name="Shi X."/>
            <person name="Wang X."/>
            <person name="Wu Q."/>
            <person name="Li C."/>
            <person name="Ren X."/>
            <person name="Wang J."/>
            <person name="Wang X."/>
            <person name="Li D."/>
            <person name="Liu D."/>
            <person name="Zhang X."/>
            <person name="Ji Z."/>
            <person name="Zhao W."/>
            <person name="Sun Y."/>
            <person name="Zhang Z."/>
            <person name="Bao J."/>
            <person name="Han Y."/>
            <person name="Dong L."/>
            <person name="Ji J."/>
            <person name="Chen P."/>
            <person name="Wu S."/>
            <person name="Liu J."/>
            <person name="Xiao Y."/>
            <person name="Bu D."/>
            <person name="Tan J."/>
            <person name="Yang L."/>
            <person name="Ye C."/>
            <person name="Zhang J."/>
            <person name="Xu J."/>
            <person name="Zhou Y."/>
            <person name="Yu Y."/>
            <person name="Zhang B."/>
            <person name="Zhuang S."/>
            <person name="Wei H."/>
            <person name="Liu B."/>
            <person name="Lei M."/>
            <person name="Yu H."/>
            <person name="Li Y."/>
            <person name="Xu H."/>
            <person name="Wei S."/>
            <person name="He X."/>
            <person name="Fang L."/>
            <person name="Zhang Z."/>
            <person name="Zhang Y."/>
            <person name="Huang X."/>
            <person name="Su Z."/>
            <person name="Tong W."/>
            <person name="Li J."/>
            <person name="Tong Z."/>
            <person name="Li S."/>
            <person name="Ye J."/>
            <person name="Wang L."/>
            <person name="Fang L."/>
            <person name="Lei T."/>
            <person name="Chen C.-S."/>
            <person name="Chen H.-C."/>
            <person name="Xu Z."/>
            <person name="Li H."/>
            <person name="Huang H."/>
            <person name="Zhang F."/>
            <person name="Xu H."/>
            <person name="Li N."/>
            <person name="Zhao C."/>
            <person name="Li S."/>
            <person name="Dong L."/>
            <person name="Huang Y."/>
            <person name="Li L."/>
            <person name="Xi Y."/>
            <person name="Qi Q."/>
            <person name="Li W."/>
            <person name="Zhang B."/>
            <person name="Hu W."/>
            <person name="Zhang Y."/>
            <person name="Tian X."/>
            <person name="Jiao Y."/>
            <person name="Liang X."/>
            <person name="Jin J."/>
            <person name="Gao L."/>
            <person name="Zheng W."/>
            <person name="Hao B."/>
            <person name="Liu S.-M."/>
            <person name="Wang W."/>
            <person name="Yuan L."/>
            <person name="Cao M."/>
            <person name="McDermott J."/>
            <person name="Samudrala R."/>
            <person name="Wang J."/>
            <person name="Wong G.K.-S."/>
            <person name="Yang H."/>
        </authorList>
    </citation>
    <scope>NUCLEOTIDE SEQUENCE [LARGE SCALE GENOMIC DNA]</scope>
    <source>
        <strain>cv. Nipponbare</strain>
    </source>
</reference>
<protein>
    <recommendedName>
        <fullName>Soluble inorganic pyrophosphatase</fullName>
        <ecNumber>3.6.1.1</ecNumber>
    </recommendedName>
    <alternativeName>
        <fullName>Pyrophosphate phospho-hydrolase</fullName>
        <shortName>PPase</shortName>
    </alternativeName>
</protein>
<accession>Q0DYB1</accession>
<accession>O22537</accession>
<accession>Q6YVH9</accession>
<accession>Q9ZSU9</accession>
<feature type="chain" id="PRO_0000137577" description="Soluble inorganic pyrophosphatase">
    <location>
        <begin position="1"/>
        <end position="214"/>
    </location>
</feature>
<feature type="binding site" evidence="2">
    <location>
        <position position="64"/>
    </location>
    <ligand>
        <name>substrate</name>
    </ligand>
</feature>
<feature type="binding site" evidence="2">
    <location>
        <position position="78"/>
    </location>
    <ligand>
        <name>substrate</name>
    </ligand>
</feature>
<feature type="binding site" evidence="2">
    <location>
        <position position="90"/>
    </location>
    <ligand>
        <name>substrate</name>
    </ligand>
</feature>
<feature type="binding site" evidence="1">
    <location>
        <position position="100"/>
    </location>
    <ligand>
        <name>Mg(2+)</name>
        <dbReference type="ChEBI" id="CHEBI:18420"/>
        <label>1</label>
    </ligand>
</feature>
<feature type="binding site" evidence="1">
    <location>
        <position position="105"/>
    </location>
    <ligand>
        <name>Mg(2+)</name>
        <dbReference type="ChEBI" id="CHEBI:18420"/>
        <label>1</label>
    </ligand>
</feature>
<feature type="binding site" evidence="1">
    <location>
        <position position="105"/>
    </location>
    <ligand>
        <name>Mg(2+)</name>
        <dbReference type="ChEBI" id="CHEBI:18420"/>
        <label>2</label>
    </ligand>
</feature>
<feature type="binding site" evidence="1">
    <location>
        <position position="137"/>
    </location>
    <ligand>
        <name>Mg(2+)</name>
        <dbReference type="ChEBI" id="CHEBI:18420"/>
        <label>1</label>
    </ligand>
</feature>
<feature type="binding site" evidence="2">
    <location>
        <position position="174"/>
    </location>
    <ligand>
        <name>substrate</name>
    </ligand>
</feature>
<feature type="sequence conflict" description="In Ref. 1; AAC78101." evidence="3" ref="1">
    <original>P</original>
    <variation>L</variation>
    <location>
        <position position="148"/>
    </location>
</feature>
<feature type="sequence conflict" description="In Ref. 1; AAC78101." evidence="3" ref="1">
    <original>P</original>
    <variation>L</variation>
    <location>
        <position position="161"/>
    </location>
</feature>
<name>IPYR_ORYSJ</name>
<keyword id="KW-0963">Cytoplasm</keyword>
<keyword id="KW-0378">Hydrolase</keyword>
<keyword id="KW-0460">Magnesium</keyword>
<keyword id="KW-0479">Metal-binding</keyword>
<keyword id="KW-1185">Reference proteome</keyword>
<proteinExistence type="evidence at transcript level"/>
<sequence length="214" mass="24160">MAGEADGKAPLGSRYPPAALNERILSSMSQKHVAAHPWHDLEIGPGAPAVFNCVVEIPRGSKVKYELDKATGLIKVDRVLYSSVVYPHNYGFIPRTLCEDGDPMDVLVLMQEQVVPGCFLRARAIGLMPMIDQGEKDDKIIAVCADDPEYRHFRDIKEIPPHRLQEIRRFFEDYKKNENKEVAVNEFLPAEDAINAIKYSMDLYGAYIIESLRK</sequence>
<dbReference type="EC" id="3.6.1.1"/>
<dbReference type="EMBL" id="AF093629">
    <property type="protein sequence ID" value="AAC78101.1"/>
    <property type="molecule type" value="mRNA"/>
</dbReference>
<dbReference type="EMBL" id="AP005825">
    <property type="protein sequence ID" value="BAD08086.1"/>
    <property type="molecule type" value="Genomic_DNA"/>
</dbReference>
<dbReference type="EMBL" id="AP008208">
    <property type="protein sequence ID" value="BAF09777.1"/>
    <property type="molecule type" value="Genomic_DNA"/>
</dbReference>
<dbReference type="EMBL" id="AP014958">
    <property type="protein sequence ID" value="BAS80505.1"/>
    <property type="molecule type" value="Genomic_DNA"/>
</dbReference>
<dbReference type="EMBL" id="CM000139">
    <property type="protein sequence ID" value="EAZ24326.1"/>
    <property type="molecule type" value="Genomic_DNA"/>
</dbReference>
<dbReference type="RefSeq" id="XP_015625137.1">
    <property type="nucleotide sequence ID" value="XM_015769651.1"/>
</dbReference>
<dbReference type="SMR" id="Q0DYB1"/>
<dbReference type="FunCoup" id="Q0DYB1">
    <property type="interactions" value="7"/>
</dbReference>
<dbReference type="STRING" id="39947.Q0DYB1"/>
<dbReference type="PaxDb" id="39947-Q0DYB1"/>
<dbReference type="EnsemblPlants" id="Os02t0704900-01">
    <property type="protein sequence ID" value="Os02t0704900-01"/>
    <property type="gene ID" value="Os02g0704900"/>
</dbReference>
<dbReference type="EnsemblPlants" id="Os02t0704900-02">
    <property type="protein sequence ID" value="Os02t0704900-02"/>
    <property type="gene ID" value="Os02g0704900"/>
</dbReference>
<dbReference type="Gramene" id="Os02t0704900-01">
    <property type="protein sequence ID" value="Os02t0704900-01"/>
    <property type="gene ID" value="Os02g0704900"/>
</dbReference>
<dbReference type="Gramene" id="Os02t0704900-02">
    <property type="protein sequence ID" value="Os02t0704900-02"/>
    <property type="gene ID" value="Os02g0704900"/>
</dbReference>
<dbReference type="KEGG" id="dosa:Os02g0704900"/>
<dbReference type="eggNOG" id="KOG1626">
    <property type="taxonomic scope" value="Eukaryota"/>
</dbReference>
<dbReference type="HOGENOM" id="CLU_073198_2_1_1"/>
<dbReference type="InParanoid" id="Q0DYB1"/>
<dbReference type="OMA" id="TYYWEHY"/>
<dbReference type="OrthoDB" id="1608002at2759"/>
<dbReference type="Proteomes" id="UP000000763">
    <property type="component" value="Chromosome 2"/>
</dbReference>
<dbReference type="Proteomes" id="UP000007752">
    <property type="component" value="Chromosome 2"/>
</dbReference>
<dbReference type="Proteomes" id="UP000059680">
    <property type="component" value="Chromosome 2"/>
</dbReference>
<dbReference type="ExpressionAtlas" id="Q0DYB1">
    <property type="expression patterns" value="baseline and differential"/>
</dbReference>
<dbReference type="GO" id="GO:0005829">
    <property type="term" value="C:cytosol"/>
    <property type="evidence" value="ECO:0000318"/>
    <property type="project" value="GO_Central"/>
</dbReference>
<dbReference type="GO" id="GO:0004427">
    <property type="term" value="F:inorganic diphosphate phosphatase activity"/>
    <property type="evidence" value="ECO:0000318"/>
    <property type="project" value="GO_Central"/>
</dbReference>
<dbReference type="GO" id="GO:0000287">
    <property type="term" value="F:magnesium ion binding"/>
    <property type="evidence" value="ECO:0007669"/>
    <property type="project" value="InterPro"/>
</dbReference>
<dbReference type="GO" id="GO:0006796">
    <property type="term" value="P:phosphate-containing compound metabolic process"/>
    <property type="evidence" value="ECO:0000318"/>
    <property type="project" value="GO_Central"/>
</dbReference>
<dbReference type="CDD" id="cd00412">
    <property type="entry name" value="pyrophosphatase"/>
    <property type="match status" value="1"/>
</dbReference>
<dbReference type="FunFam" id="3.90.80.10:FF:000002">
    <property type="entry name" value="Soluble inorganic pyrophosphatase 4"/>
    <property type="match status" value="1"/>
</dbReference>
<dbReference type="Gene3D" id="3.90.80.10">
    <property type="entry name" value="Inorganic pyrophosphatase"/>
    <property type="match status" value="1"/>
</dbReference>
<dbReference type="HAMAP" id="MF_00209">
    <property type="entry name" value="Inorganic_PPase"/>
    <property type="match status" value="1"/>
</dbReference>
<dbReference type="InterPro" id="IPR008162">
    <property type="entry name" value="Pyrophosphatase"/>
</dbReference>
<dbReference type="InterPro" id="IPR036649">
    <property type="entry name" value="Pyrophosphatase_sf"/>
</dbReference>
<dbReference type="PANTHER" id="PTHR10286">
    <property type="entry name" value="INORGANIC PYROPHOSPHATASE"/>
    <property type="match status" value="1"/>
</dbReference>
<dbReference type="Pfam" id="PF00719">
    <property type="entry name" value="Pyrophosphatase"/>
    <property type="match status" value="1"/>
</dbReference>
<dbReference type="SUPFAM" id="SSF50324">
    <property type="entry name" value="Inorganic pyrophosphatase"/>
    <property type="match status" value="1"/>
</dbReference>
<dbReference type="PROSITE" id="PS00387">
    <property type="entry name" value="PPASE"/>
    <property type="match status" value="1"/>
</dbReference>
<gene>
    <name type="primary">IPP</name>
    <name type="ordered locus">Os02g0704900</name>
    <name type="ordered locus">LOC_Os02g47600</name>
    <name type="ORF">OsJ_007809</name>
    <name type="ORF">P0724B10.39</name>
</gene>
<organism>
    <name type="scientific">Oryza sativa subsp. japonica</name>
    <name type="common">Rice</name>
    <dbReference type="NCBI Taxonomy" id="39947"/>
    <lineage>
        <taxon>Eukaryota</taxon>
        <taxon>Viridiplantae</taxon>
        <taxon>Streptophyta</taxon>
        <taxon>Embryophyta</taxon>
        <taxon>Tracheophyta</taxon>
        <taxon>Spermatophyta</taxon>
        <taxon>Magnoliopsida</taxon>
        <taxon>Liliopsida</taxon>
        <taxon>Poales</taxon>
        <taxon>Poaceae</taxon>
        <taxon>BOP clade</taxon>
        <taxon>Oryzoideae</taxon>
        <taxon>Oryzeae</taxon>
        <taxon>Oryzinae</taxon>
        <taxon>Oryza</taxon>
        <taxon>Oryza sativa</taxon>
    </lineage>
</organism>
<evidence type="ECO:0000250" key="1"/>
<evidence type="ECO:0000250" key="2">
    <source>
        <dbReference type="UniProtKB" id="P9WI55"/>
    </source>
</evidence>
<evidence type="ECO:0000305" key="3"/>
<comment type="catalytic activity">
    <reaction>
        <text>diphosphate + H2O = 2 phosphate + H(+)</text>
        <dbReference type="Rhea" id="RHEA:24576"/>
        <dbReference type="ChEBI" id="CHEBI:15377"/>
        <dbReference type="ChEBI" id="CHEBI:15378"/>
        <dbReference type="ChEBI" id="CHEBI:33019"/>
        <dbReference type="ChEBI" id="CHEBI:43474"/>
        <dbReference type="EC" id="3.6.1.1"/>
    </reaction>
</comment>
<comment type="cofactor">
    <cofactor evidence="1">
        <name>Mg(2+)</name>
        <dbReference type="ChEBI" id="CHEBI:18420"/>
    </cofactor>
</comment>
<comment type="subcellular location">
    <subcellularLocation>
        <location>Cytoplasm</location>
    </subcellularLocation>
</comment>
<comment type="similarity">
    <text evidence="3">Belongs to the PPase family.</text>
</comment>